<keyword id="KW-1185">Reference proteome</keyword>
<keyword id="KW-0964">Secreted</keyword>
<keyword id="KW-0732">Signal</keyword>
<gene>
    <name type="primary">EGC1</name>
    <name type="synonym">EXPR2</name>
    <name type="synonym">PNP-B</name>
    <name type="ordered locus">At4g30380</name>
    <name type="ORF">F17I23_280</name>
</gene>
<protein>
    <recommendedName>
        <fullName>Putative EG45-like domain containing protein 1</fullName>
    </recommendedName>
    <alternativeName>
        <fullName>Plant natriuretic peptide B</fullName>
        <shortName>AtEXPR2</shortName>
        <shortName>AtPNP-B</shortName>
        <shortName>Ath-ExpGamma-1.1</shortName>
    </alternativeName>
</protein>
<sequence>MSKSIVFFSTVLVFLFSFSYATPGIATFYTSYTPCYRGTQEGVMIAAASDTLWDNGRVCGKMFTVKCSGPRNAVPHPCTGKSVKVKIVDHCPSGCASTLDLSREAFAQIANPVAGIINIDYFP</sequence>
<dbReference type="EMBL" id="AL161577">
    <property type="protein sequence ID" value="CAB79756.1"/>
    <property type="molecule type" value="Genomic_DNA"/>
</dbReference>
<dbReference type="EMBL" id="CP002687">
    <property type="status" value="NOT_ANNOTATED_CDS"/>
    <property type="molecule type" value="Genomic_DNA"/>
</dbReference>
<dbReference type="PIR" id="C85355">
    <property type="entry name" value="C85355"/>
</dbReference>
<dbReference type="SMR" id="Q9M0C2"/>
<dbReference type="STRING" id="3702.Q9M0C2"/>
<dbReference type="GlyGen" id="Q9M0C2">
    <property type="glycosylation" value="1 site"/>
</dbReference>
<dbReference type="PaxDb" id="3702-AT4G30380.1"/>
<dbReference type="Araport" id="AT4G30380"/>
<dbReference type="TAIR" id="AT4G30380"/>
<dbReference type="eggNOG" id="ENOG502S1DA">
    <property type="taxonomic scope" value="Eukaryota"/>
</dbReference>
<dbReference type="HOGENOM" id="CLU_112218_2_1_1"/>
<dbReference type="InParanoid" id="Q9M0C2"/>
<dbReference type="PhylomeDB" id="Q9M0C2"/>
<dbReference type="PRO" id="PR:Q9M0C2"/>
<dbReference type="Proteomes" id="UP000006548">
    <property type="component" value="Chromosome 4"/>
</dbReference>
<dbReference type="ExpressionAtlas" id="Q9M0C2">
    <property type="expression patterns" value="baseline and differential"/>
</dbReference>
<dbReference type="GO" id="GO:0048046">
    <property type="term" value="C:apoplast"/>
    <property type="evidence" value="ECO:0007669"/>
    <property type="project" value="InterPro"/>
</dbReference>
<dbReference type="GO" id="GO:0071456">
    <property type="term" value="P:cellular response to hypoxia"/>
    <property type="evidence" value="ECO:0000270"/>
    <property type="project" value="TAIR"/>
</dbReference>
<dbReference type="GO" id="GO:0009627">
    <property type="term" value="P:systemic acquired resistance"/>
    <property type="evidence" value="ECO:0007669"/>
    <property type="project" value="InterPro"/>
</dbReference>
<dbReference type="CDD" id="cd22269">
    <property type="entry name" value="DPBB_EG45-like"/>
    <property type="match status" value="1"/>
</dbReference>
<dbReference type="FunFam" id="2.40.40.10:FF:000005">
    <property type="entry name" value="Barwin-related endoglucanase"/>
    <property type="match status" value="1"/>
</dbReference>
<dbReference type="Gene3D" id="2.40.40.10">
    <property type="entry name" value="RlpA-like domain"/>
    <property type="match status" value="1"/>
</dbReference>
<dbReference type="InterPro" id="IPR044206">
    <property type="entry name" value="EGC1/2"/>
</dbReference>
<dbReference type="InterPro" id="IPR007112">
    <property type="entry name" value="Expansin/allergen_DPBB_dom"/>
</dbReference>
<dbReference type="InterPro" id="IPR009009">
    <property type="entry name" value="RlpA-like_DPBB"/>
</dbReference>
<dbReference type="InterPro" id="IPR036908">
    <property type="entry name" value="RlpA-like_sf"/>
</dbReference>
<dbReference type="PANTHER" id="PTHR47295">
    <property type="entry name" value="EG45-LIKE DOMAIN CONTAINING PROTEIN 1-RELATED"/>
    <property type="match status" value="1"/>
</dbReference>
<dbReference type="PANTHER" id="PTHR47295:SF2">
    <property type="entry name" value="EG45-LIKE DOMAIN CONTAINING PROTEIN 1-RELATED"/>
    <property type="match status" value="1"/>
</dbReference>
<dbReference type="Pfam" id="PF03330">
    <property type="entry name" value="DPBB_1"/>
    <property type="match status" value="1"/>
</dbReference>
<dbReference type="SMART" id="SM00837">
    <property type="entry name" value="DPBB_1"/>
    <property type="match status" value="1"/>
</dbReference>
<dbReference type="SUPFAM" id="SSF50685">
    <property type="entry name" value="Barwin-like endoglucanases"/>
    <property type="match status" value="1"/>
</dbReference>
<dbReference type="PROSITE" id="PS50842">
    <property type="entry name" value="EXPANSIN_EG45"/>
    <property type="match status" value="1"/>
</dbReference>
<evidence type="ECO:0000250" key="1"/>
<evidence type="ECO:0000255" key="2"/>
<evidence type="ECO:0000255" key="3">
    <source>
        <dbReference type="PROSITE-ProRule" id="PRU00079"/>
    </source>
</evidence>
<evidence type="ECO:0000305" key="4"/>
<feature type="signal peptide" evidence="2">
    <location>
        <begin position="1"/>
        <end position="21"/>
    </location>
</feature>
<feature type="chain" id="PRO_0000008716" description="Putative EG45-like domain containing protein 1">
    <location>
        <begin position="22"/>
        <end position="123"/>
    </location>
</feature>
<feature type="domain" description="Expansin-like EG45" evidence="3">
    <location>
        <begin position="24"/>
        <end position="123"/>
    </location>
</feature>
<name>EGC1_ARATH</name>
<organism>
    <name type="scientific">Arabidopsis thaliana</name>
    <name type="common">Mouse-ear cress</name>
    <dbReference type="NCBI Taxonomy" id="3702"/>
    <lineage>
        <taxon>Eukaryota</taxon>
        <taxon>Viridiplantae</taxon>
        <taxon>Streptophyta</taxon>
        <taxon>Embryophyta</taxon>
        <taxon>Tracheophyta</taxon>
        <taxon>Spermatophyta</taxon>
        <taxon>Magnoliopsida</taxon>
        <taxon>eudicotyledons</taxon>
        <taxon>Gunneridae</taxon>
        <taxon>Pentapetalae</taxon>
        <taxon>rosids</taxon>
        <taxon>malvids</taxon>
        <taxon>Brassicales</taxon>
        <taxon>Brassicaceae</taxon>
        <taxon>Camelineae</taxon>
        <taxon>Arabidopsis</taxon>
    </lineage>
</organism>
<reference key="1">
    <citation type="journal article" date="1999" name="Nature">
        <title>Sequence and analysis of chromosome 4 of the plant Arabidopsis thaliana.</title>
        <authorList>
            <person name="Mayer K.F.X."/>
            <person name="Schueller C."/>
            <person name="Wambutt R."/>
            <person name="Murphy G."/>
            <person name="Volckaert G."/>
            <person name="Pohl T."/>
            <person name="Duesterhoeft A."/>
            <person name="Stiekema W."/>
            <person name="Entian K.-D."/>
            <person name="Terryn N."/>
            <person name="Harris B."/>
            <person name="Ansorge W."/>
            <person name="Brandt P."/>
            <person name="Grivell L.A."/>
            <person name="Rieger M."/>
            <person name="Weichselgartner M."/>
            <person name="de Simone V."/>
            <person name="Obermaier B."/>
            <person name="Mache R."/>
            <person name="Mueller M."/>
            <person name="Kreis M."/>
            <person name="Delseny M."/>
            <person name="Puigdomenech P."/>
            <person name="Watson M."/>
            <person name="Schmidtheini T."/>
            <person name="Reichert B."/>
            <person name="Portetelle D."/>
            <person name="Perez-Alonso M."/>
            <person name="Boutry M."/>
            <person name="Bancroft I."/>
            <person name="Vos P."/>
            <person name="Hoheisel J."/>
            <person name="Zimmermann W."/>
            <person name="Wedler H."/>
            <person name="Ridley P."/>
            <person name="Langham S.-A."/>
            <person name="McCullagh B."/>
            <person name="Bilham L."/>
            <person name="Robben J."/>
            <person name="van der Schueren J."/>
            <person name="Grymonprez B."/>
            <person name="Chuang Y.-J."/>
            <person name="Vandenbussche F."/>
            <person name="Braeken M."/>
            <person name="Weltjens I."/>
            <person name="Voet M."/>
            <person name="Bastiaens I."/>
            <person name="Aert R."/>
            <person name="Defoor E."/>
            <person name="Weitzenegger T."/>
            <person name="Bothe G."/>
            <person name="Ramsperger U."/>
            <person name="Hilbert H."/>
            <person name="Braun M."/>
            <person name="Holzer E."/>
            <person name="Brandt A."/>
            <person name="Peters S."/>
            <person name="van Staveren M."/>
            <person name="Dirkse W."/>
            <person name="Mooijman P."/>
            <person name="Klein Lankhorst R."/>
            <person name="Rose M."/>
            <person name="Hauf J."/>
            <person name="Koetter P."/>
            <person name="Berneiser S."/>
            <person name="Hempel S."/>
            <person name="Feldpausch M."/>
            <person name="Lamberth S."/>
            <person name="Van den Daele H."/>
            <person name="De Keyser A."/>
            <person name="Buysshaert C."/>
            <person name="Gielen J."/>
            <person name="Villarroel R."/>
            <person name="De Clercq R."/>
            <person name="van Montagu M."/>
            <person name="Rogers J."/>
            <person name="Cronin A."/>
            <person name="Quail M.A."/>
            <person name="Bray-Allen S."/>
            <person name="Clark L."/>
            <person name="Doggett J."/>
            <person name="Hall S."/>
            <person name="Kay M."/>
            <person name="Lennard N."/>
            <person name="McLay K."/>
            <person name="Mayes R."/>
            <person name="Pettett A."/>
            <person name="Rajandream M.A."/>
            <person name="Lyne M."/>
            <person name="Benes V."/>
            <person name="Rechmann S."/>
            <person name="Borkova D."/>
            <person name="Bloecker H."/>
            <person name="Scharfe M."/>
            <person name="Grimm M."/>
            <person name="Loehnert T.-H."/>
            <person name="Dose S."/>
            <person name="de Haan M."/>
            <person name="Maarse A.C."/>
            <person name="Schaefer M."/>
            <person name="Mueller-Auer S."/>
            <person name="Gabel C."/>
            <person name="Fuchs M."/>
            <person name="Fartmann B."/>
            <person name="Granderath K."/>
            <person name="Dauner D."/>
            <person name="Herzl A."/>
            <person name="Neumann S."/>
            <person name="Argiriou A."/>
            <person name="Vitale D."/>
            <person name="Liguori R."/>
            <person name="Piravandi E."/>
            <person name="Massenet O."/>
            <person name="Quigley F."/>
            <person name="Clabauld G."/>
            <person name="Muendlein A."/>
            <person name="Felber R."/>
            <person name="Schnabl S."/>
            <person name="Hiller R."/>
            <person name="Schmidt W."/>
            <person name="Lecharny A."/>
            <person name="Aubourg S."/>
            <person name="Chefdor F."/>
            <person name="Cooke R."/>
            <person name="Berger C."/>
            <person name="Monfort A."/>
            <person name="Casacuberta E."/>
            <person name="Gibbons T."/>
            <person name="Weber N."/>
            <person name="Vandenbol M."/>
            <person name="Bargues M."/>
            <person name="Terol J."/>
            <person name="Torres A."/>
            <person name="Perez-Perez A."/>
            <person name="Purnelle B."/>
            <person name="Bent E."/>
            <person name="Johnson S."/>
            <person name="Tacon D."/>
            <person name="Jesse T."/>
            <person name="Heijnen L."/>
            <person name="Schwarz S."/>
            <person name="Scholler P."/>
            <person name="Heber S."/>
            <person name="Francs P."/>
            <person name="Bielke C."/>
            <person name="Frishman D."/>
            <person name="Haase D."/>
            <person name="Lemcke K."/>
            <person name="Mewes H.-W."/>
            <person name="Stocker S."/>
            <person name="Zaccaria P."/>
            <person name="Bevan M."/>
            <person name="Wilson R.K."/>
            <person name="de la Bastide M."/>
            <person name="Habermann K."/>
            <person name="Parnell L."/>
            <person name="Dedhia N."/>
            <person name="Gnoj L."/>
            <person name="Schutz K."/>
            <person name="Huang E."/>
            <person name="Spiegel L."/>
            <person name="Sekhon M."/>
            <person name="Murray J."/>
            <person name="Sheet P."/>
            <person name="Cordes M."/>
            <person name="Abu-Threideh J."/>
            <person name="Stoneking T."/>
            <person name="Kalicki J."/>
            <person name="Graves T."/>
            <person name="Harmon G."/>
            <person name="Edwards J."/>
            <person name="Latreille P."/>
            <person name="Courtney L."/>
            <person name="Cloud J."/>
            <person name="Abbott A."/>
            <person name="Scott K."/>
            <person name="Johnson D."/>
            <person name="Minx P."/>
            <person name="Bentley D."/>
            <person name="Fulton B."/>
            <person name="Miller N."/>
            <person name="Greco T."/>
            <person name="Kemp K."/>
            <person name="Kramer J."/>
            <person name="Fulton L."/>
            <person name="Mardis E."/>
            <person name="Dante M."/>
            <person name="Pepin K."/>
            <person name="Hillier L.W."/>
            <person name="Nelson J."/>
            <person name="Spieth J."/>
            <person name="Ryan E."/>
            <person name="Andrews S."/>
            <person name="Geisel C."/>
            <person name="Layman D."/>
            <person name="Du H."/>
            <person name="Ali J."/>
            <person name="Berghoff A."/>
            <person name="Jones K."/>
            <person name="Drone K."/>
            <person name="Cotton M."/>
            <person name="Joshu C."/>
            <person name="Antonoiu B."/>
            <person name="Zidanic M."/>
            <person name="Strong C."/>
            <person name="Sun H."/>
            <person name="Lamar B."/>
            <person name="Yordan C."/>
            <person name="Ma P."/>
            <person name="Zhong J."/>
            <person name="Preston R."/>
            <person name="Vil D."/>
            <person name="Shekher M."/>
            <person name="Matero A."/>
            <person name="Shah R."/>
            <person name="Swaby I.K."/>
            <person name="O'Shaughnessy A."/>
            <person name="Rodriguez M."/>
            <person name="Hoffman J."/>
            <person name="Till S."/>
            <person name="Granat S."/>
            <person name="Shohdy N."/>
            <person name="Hasegawa A."/>
            <person name="Hameed A."/>
            <person name="Lodhi M."/>
            <person name="Johnson A."/>
            <person name="Chen E."/>
            <person name="Marra M.A."/>
            <person name="Martienssen R."/>
            <person name="McCombie W.R."/>
        </authorList>
    </citation>
    <scope>NUCLEOTIDE SEQUENCE [LARGE SCALE GENOMIC DNA]</scope>
    <source>
        <strain>cv. Columbia</strain>
    </source>
</reference>
<reference key="2">
    <citation type="journal article" date="2017" name="Plant J.">
        <title>Araport11: a complete reannotation of the Arabidopsis thaliana reference genome.</title>
        <authorList>
            <person name="Cheng C.Y."/>
            <person name="Krishnakumar V."/>
            <person name="Chan A.P."/>
            <person name="Thibaud-Nissen F."/>
            <person name="Schobel S."/>
            <person name="Town C.D."/>
        </authorList>
    </citation>
    <scope>GENOME REANNOTATION</scope>
    <source>
        <strain>cv. Columbia</strain>
    </source>
</reference>
<reference key="3">
    <citation type="journal article" date="2002" name="J. Mol. Evol.">
        <title>Expansin-like molecules: novel functions derived from common domains.</title>
        <authorList>
            <person name="Ludidi N.N."/>
            <person name="Heazlewood J.L."/>
            <person name="Seoighe C."/>
            <person name="Irving H.R."/>
            <person name="Gehring C.A."/>
        </authorList>
    </citation>
    <scope>IDENTIFICATION</scope>
</reference>
<proteinExistence type="inferred from homology"/>
<accession>Q9M0C2</accession>
<comment type="function">
    <text evidence="1">Might have a systemic role in water and solute homeostasis.</text>
</comment>
<comment type="subcellular location">
    <subcellularLocation>
        <location evidence="4">Secreted</location>
    </subcellularLocation>
</comment>